<name>HEM2_PEA</name>
<evidence type="ECO:0000250" key="1"/>
<evidence type="ECO:0000256" key="2">
    <source>
        <dbReference type="SAM" id="MobiDB-lite"/>
    </source>
</evidence>
<evidence type="ECO:0000269" key="3">
    <source>
    </source>
</evidence>
<evidence type="ECO:0000305" key="4"/>
<reference key="1">
    <citation type="journal article" date="1991" name="J. Biol. Chem.">
        <title>Aminolevulinic acid dehydratase in pea (Pisum sativum L.). Identification of an unusual metal-binding domain in the plant enzyme.</title>
        <authorList>
            <person name="Boese Q.F."/>
            <person name="Spano A.J."/>
            <person name="Li J."/>
            <person name="Timko M.P."/>
        </authorList>
    </citation>
    <scope>NUCLEOTIDE SEQUENCE [MRNA]</scope>
</reference>
<reference key="2">
    <citation type="journal article" date="2000" name="Biochemistry">
        <title>Porphobilinogen synthase from pea: expression from an artificial gene, kinetic characterization, and novel implications for subunit interactions.</title>
        <authorList>
            <person name="Kervinen J."/>
            <person name="Dunbrack R.L. Jr."/>
            <person name="Litwin S."/>
            <person name="Martins J."/>
            <person name="Scarrow R.C."/>
            <person name="Volin M."/>
            <person name="Yeung A.T."/>
            <person name="Yoon E."/>
            <person name="Jaffe E.K."/>
        </authorList>
    </citation>
    <scope>PROTEIN SEQUENCE OF 70-75</scope>
    <scope>CATALYTIC ACTIVITY</scope>
    <scope>FUNCTION</scope>
    <scope>COFACTOR</scope>
    <scope>ACTIVITY REGULATION</scope>
    <scope>IDENTIFICATION BY MASS SPECTROMETRY</scope>
    <scope>SUBUNIT</scope>
</reference>
<organism>
    <name type="scientific">Pisum sativum</name>
    <name type="common">Garden pea</name>
    <name type="synonym">Lathyrus oleraceus</name>
    <dbReference type="NCBI Taxonomy" id="3888"/>
    <lineage>
        <taxon>Eukaryota</taxon>
        <taxon>Viridiplantae</taxon>
        <taxon>Streptophyta</taxon>
        <taxon>Embryophyta</taxon>
        <taxon>Tracheophyta</taxon>
        <taxon>Spermatophyta</taxon>
        <taxon>Magnoliopsida</taxon>
        <taxon>eudicotyledons</taxon>
        <taxon>Gunneridae</taxon>
        <taxon>Pentapetalae</taxon>
        <taxon>rosids</taxon>
        <taxon>fabids</taxon>
        <taxon>Fabales</taxon>
        <taxon>Fabaceae</taxon>
        <taxon>Papilionoideae</taxon>
        <taxon>50 kb inversion clade</taxon>
        <taxon>NPAAA clade</taxon>
        <taxon>Hologalegina</taxon>
        <taxon>IRL clade</taxon>
        <taxon>Fabeae</taxon>
        <taxon>Pisum</taxon>
    </lineage>
</organism>
<feature type="transit peptide" description="Chloroplast">
    <location>
        <begin position="1" status="less than"/>
        <end status="unknown"/>
    </location>
</feature>
<feature type="chain" id="PRO_0000013317" description="Delta-aminolevulinic acid dehydratase, chloroplastic">
    <location>
        <begin status="unknown"/>
        <end position="398"/>
    </location>
</feature>
<feature type="region of interest" description="Disordered" evidence="2">
    <location>
        <begin position="48"/>
        <end position="87"/>
    </location>
</feature>
<feature type="compositionally biased region" description="Pro residues" evidence="2">
    <location>
        <begin position="50"/>
        <end position="59"/>
    </location>
</feature>
<feature type="compositionally biased region" description="Low complexity" evidence="2">
    <location>
        <begin position="60"/>
        <end position="69"/>
    </location>
</feature>
<feature type="compositionally biased region" description="Basic residues" evidence="2">
    <location>
        <begin position="74"/>
        <end position="83"/>
    </location>
</feature>
<feature type="active site" description="Schiff-base intermediate with substrate" evidence="1">
    <location>
        <position position="266"/>
    </location>
</feature>
<feature type="active site" description="Schiff-base intermediate with substrate" evidence="1">
    <location>
        <position position="319"/>
    </location>
</feature>
<feature type="binding site" evidence="1">
    <location>
        <position position="276"/>
    </location>
    <ligand>
        <name>5-aminolevulinate</name>
        <dbReference type="ChEBI" id="CHEBI:356416"/>
        <label>1</label>
    </ligand>
</feature>
<feature type="binding site" evidence="1">
    <location>
        <position position="288"/>
    </location>
    <ligand>
        <name>5-aminolevulinate</name>
        <dbReference type="ChEBI" id="CHEBI:356416"/>
        <label>1</label>
    </ligand>
</feature>
<feature type="binding site" evidence="1">
    <location>
        <position position="304"/>
    </location>
    <ligand>
        <name>Mg(2+)</name>
        <dbReference type="ChEBI" id="CHEBI:18420"/>
    </ligand>
</feature>
<feature type="binding site" evidence="1">
    <location>
        <position position="345"/>
    </location>
    <ligand>
        <name>5-aminolevulinate</name>
        <dbReference type="ChEBI" id="CHEBI:356416"/>
        <label>2</label>
    </ligand>
</feature>
<feature type="binding site" evidence="1">
    <location>
        <position position="384"/>
    </location>
    <ligand>
        <name>5-aminolevulinate</name>
        <dbReference type="ChEBI" id="CHEBI:356416"/>
        <label>2</label>
    </ligand>
</feature>
<feature type="non-terminal residue">
    <location>
        <position position="1"/>
    </location>
</feature>
<comment type="function">
    <text evidence="3">Catalyzes an early step in the biosynthesis of tetrapyrroles. Binds two molecules of 5-aminolevulinate per subunit, each at a distinct site, and catalyzes their condensation to form porphobilinogen.</text>
</comment>
<comment type="catalytic activity">
    <reaction evidence="3">
        <text>2 5-aminolevulinate = porphobilinogen + 2 H2O + H(+)</text>
        <dbReference type="Rhea" id="RHEA:24064"/>
        <dbReference type="ChEBI" id="CHEBI:15377"/>
        <dbReference type="ChEBI" id="CHEBI:15378"/>
        <dbReference type="ChEBI" id="CHEBI:58126"/>
        <dbReference type="ChEBI" id="CHEBI:356416"/>
        <dbReference type="EC" id="4.2.1.24"/>
    </reaction>
</comment>
<comment type="cofactor">
    <cofactor evidence="3">
        <name>Mg(2+)</name>
        <dbReference type="ChEBI" id="CHEBI:18420"/>
    </cofactor>
    <text evidence="3">Binds 2 magnesium ions per monomer. The first magnesium ion is required for catalysis. The second functions as allosteric activator.</text>
</comment>
<comment type="activity regulation">
    <text evidence="3">Activated by magnesium. Inhibited by succinyl acetone. Enzyme activity may depend on the oligomerization state, where the fully active octamer may dissociate and reassemble into less active lower oligomers.</text>
</comment>
<comment type="pathway">
    <text>Porphyrin-containing compound metabolism; protoporphyrin-IX biosynthesis; coproporphyrinogen-III from 5-aminolevulinate: step 1/4.</text>
</comment>
<comment type="subunit">
    <text evidence="3">Homooctamer; formed by oligomerization of dimers. Probably also forms lower oligomers.</text>
</comment>
<comment type="subcellular location">
    <subcellularLocation>
        <location>Plastid</location>
        <location>Chloroplast</location>
    </subcellularLocation>
</comment>
<comment type="similarity">
    <text evidence="4">Belongs to the ALAD family.</text>
</comment>
<gene>
    <name type="primary">HEMB</name>
    <name type="synonym">ALAD</name>
</gene>
<sequence>HTFVDLKSPFTLSNYLSFSSSKRRQPPSLFTVRASDSDFEAAVVAGKVPEAPPVPPTPASPAGTPVVPSLPIQRRPRRNRRSPALRSAFQETTLSPANFVYPLFIHEGEEDTPIGAMPGCYRLGWRHGLLEEVAKARDVGVNSVVLFPKIPDALKTPTGDEAYNEDGLVPRSIRLLKDKYPDLIIYTDVALDPYSSDGHDGIVREDGVIMNDETVHQLCKQAVAQARAGADVVSPSDMMDGRVGAMRVALDAEGFQHVSIMSYTAKYASSFYGPFREALDSNPRFGDKKTYQMNPANYREALTEMREDESEGADILLVKPGLPYLDIIRLLRDNSPLPIAAYQVSGEYSMIKAGGALKMIDEEKVMMESLLCLRRAGADIILTYFALQAARTLCGEKR</sequence>
<dbReference type="EC" id="4.2.1.24"/>
<dbReference type="EMBL" id="M71235">
    <property type="protein sequence ID" value="AAA33640.1"/>
    <property type="molecule type" value="mRNA"/>
</dbReference>
<dbReference type="PIR" id="A40966">
    <property type="entry name" value="A40966"/>
</dbReference>
<dbReference type="SMR" id="P30124"/>
<dbReference type="BindingDB" id="P30124"/>
<dbReference type="ChEMBL" id="CHEMBL3286082"/>
<dbReference type="UniPathway" id="UPA00251">
    <property type="reaction ID" value="UER00318"/>
</dbReference>
<dbReference type="GO" id="GO:0009507">
    <property type="term" value="C:chloroplast"/>
    <property type="evidence" value="ECO:0007669"/>
    <property type="project" value="UniProtKB-SubCell"/>
</dbReference>
<dbReference type="GO" id="GO:0005829">
    <property type="term" value="C:cytosol"/>
    <property type="evidence" value="ECO:0007669"/>
    <property type="project" value="TreeGrafter"/>
</dbReference>
<dbReference type="GO" id="GO:0004655">
    <property type="term" value="F:porphobilinogen synthase activity"/>
    <property type="evidence" value="ECO:0007669"/>
    <property type="project" value="UniProtKB-EC"/>
</dbReference>
<dbReference type="GO" id="GO:0008270">
    <property type="term" value="F:zinc ion binding"/>
    <property type="evidence" value="ECO:0007669"/>
    <property type="project" value="TreeGrafter"/>
</dbReference>
<dbReference type="GO" id="GO:0015995">
    <property type="term" value="P:chlorophyll biosynthetic process"/>
    <property type="evidence" value="ECO:0007669"/>
    <property type="project" value="UniProtKB-KW"/>
</dbReference>
<dbReference type="GO" id="GO:0006782">
    <property type="term" value="P:protoporphyrinogen IX biosynthetic process"/>
    <property type="evidence" value="ECO:0007669"/>
    <property type="project" value="UniProtKB-UniPathway"/>
</dbReference>
<dbReference type="CDD" id="cd04823">
    <property type="entry name" value="ALAD_PBGS_aspartate_rich"/>
    <property type="match status" value="1"/>
</dbReference>
<dbReference type="FunFam" id="3.20.20.70:FF:000101">
    <property type="entry name" value="Delta-aminolevulinic acid dehydratase"/>
    <property type="match status" value="1"/>
</dbReference>
<dbReference type="Gene3D" id="3.20.20.70">
    <property type="entry name" value="Aldolase class I"/>
    <property type="match status" value="1"/>
</dbReference>
<dbReference type="InterPro" id="IPR001731">
    <property type="entry name" value="ALAD"/>
</dbReference>
<dbReference type="InterPro" id="IPR030656">
    <property type="entry name" value="ALAD_AS"/>
</dbReference>
<dbReference type="InterPro" id="IPR013785">
    <property type="entry name" value="Aldolase_TIM"/>
</dbReference>
<dbReference type="NCBIfam" id="NF006762">
    <property type="entry name" value="PRK09283.1"/>
    <property type="match status" value="1"/>
</dbReference>
<dbReference type="PANTHER" id="PTHR11458">
    <property type="entry name" value="DELTA-AMINOLEVULINIC ACID DEHYDRATASE"/>
    <property type="match status" value="1"/>
</dbReference>
<dbReference type="PANTHER" id="PTHR11458:SF0">
    <property type="entry name" value="DELTA-AMINOLEVULINIC ACID DEHYDRATASE"/>
    <property type="match status" value="1"/>
</dbReference>
<dbReference type="Pfam" id="PF00490">
    <property type="entry name" value="ALAD"/>
    <property type="match status" value="1"/>
</dbReference>
<dbReference type="PRINTS" id="PR00144">
    <property type="entry name" value="DALDHYDRTASE"/>
</dbReference>
<dbReference type="SMART" id="SM01004">
    <property type="entry name" value="ALAD"/>
    <property type="match status" value="1"/>
</dbReference>
<dbReference type="SUPFAM" id="SSF51569">
    <property type="entry name" value="Aldolase"/>
    <property type="match status" value="1"/>
</dbReference>
<dbReference type="PROSITE" id="PS00169">
    <property type="entry name" value="D_ALA_DEHYDRATASE"/>
    <property type="match status" value="1"/>
</dbReference>
<proteinExistence type="evidence at protein level"/>
<keyword id="KW-0021">Allosteric enzyme</keyword>
<keyword id="KW-0149">Chlorophyll biosynthesis</keyword>
<keyword id="KW-0150">Chloroplast</keyword>
<keyword id="KW-0903">Direct protein sequencing</keyword>
<keyword id="KW-0350">Heme biosynthesis</keyword>
<keyword id="KW-0456">Lyase</keyword>
<keyword id="KW-0460">Magnesium</keyword>
<keyword id="KW-0479">Metal-binding</keyword>
<keyword id="KW-0934">Plastid</keyword>
<keyword id="KW-0627">Porphyrin biosynthesis</keyword>
<keyword id="KW-0809">Transit peptide</keyword>
<accession>P30124</accession>
<protein>
    <recommendedName>
        <fullName>Delta-aminolevulinic acid dehydratase, chloroplastic</fullName>
        <shortName>ALADH</shortName>
        <ecNumber>4.2.1.24</ecNumber>
    </recommendedName>
    <alternativeName>
        <fullName>Porphobilinogen synthase</fullName>
    </alternativeName>
</protein>